<protein>
    <recommendedName>
        <fullName evidence="1">Elongation factor Ts</fullName>
        <shortName evidence="1">EF-Ts</shortName>
    </recommendedName>
</protein>
<sequence length="283" mass="30423">MAEITASLVKELRERTGAGMMDCKKALTEANGDIELAIENMRKSGAIKAAKKAGNVAADGVIKTKIDGNYGIILEVNCQTDFVAKDAGFQAFADKVLDAAVAGKITDVEVLKAQFEEERVALVAKIGENINIRRVAALEGDVLGSYQHGARIGVLVAAKGADEELVKHIAMHVAASKPEFIKPEDVSAEVVEKEYQVQLDIAMQSGKPKEIAEKMVEGRMKKFTGEVSLTGQPFVMEPSKTVGQLLKEHNAEVTGFIRFEVGEGIEKVETDFAAEVAAMSKQS</sequence>
<organism>
    <name type="scientific">Escherichia coli O9:H4 (strain HS)</name>
    <dbReference type="NCBI Taxonomy" id="331112"/>
    <lineage>
        <taxon>Bacteria</taxon>
        <taxon>Pseudomonadati</taxon>
        <taxon>Pseudomonadota</taxon>
        <taxon>Gammaproteobacteria</taxon>
        <taxon>Enterobacterales</taxon>
        <taxon>Enterobacteriaceae</taxon>
        <taxon>Escherichia</taxon>
    </lineage>
</organism>
<name>EFTS_ECOHS</name>
<feature type="chain" id="PRO_1000057353" description="Elongation factor Ts">
    <location>
        <begin position="1"/>
        <end position="283"/>
    </location>
</feature>
<feature type="region of interest" description="Involved in Mg(2+) ion dislocation from EF-Tu" evidence="1">
    <location>
        <begin position="80"/>
        <end position="83"/>
    </location>
</feature>
<proteinExistence type="inferred from homology"/>
<comment type="function">
    <text evidence="1">Associates with the EF-Tu.GDP complex and induces the exchange of GDP to GTP. It remains bound to the aminoacyl-tRNA.EF-Tu.GTP complex up to the GTP hydrolysis stage on the ribosome.</text>
</comment>
<comment type="subcellular location">
    <subcellularLocation>
        <location evidence="1">Cytoplasm</location>
    </subcellularLocation>
</comment>
<comment type="similarity">
    <text evidence="1">Belongs to the EF-Ts family.</text>
</comment>
<reference key="1">
    <citation type="journal article" date="2008" name="J. Bacteriol.">
        <title>The pangenome structure of Escherichia coli: comparative genomic analysis of E. coli commensal and pathogenic isolates.</title>
        <authorList>
            <person name="Rasko D.A."/>
            <person name="Rosovitz M.J."/>
            <person name="Myers G.S.A."/>
            <person name="Mongodin E.F."/>
            <person name="Fricke W.F."/>
            <person name="Gajer P."/>
            <person name="Crabtree J."/>
            <person name="Sebaihia M."/>
            <person name="Thomson N.R."/>
            <person name="Chaudhuri R."/>
            <person name="Henderson I.R."/>
            <person name="Sperandio V."/>
            <person name="Ravel J."/>
        </authorList>
    </citation>
    <scope>NUCLEOTIDE SEQUENCE [LARGE SCALE GENOMIC DNA]</scope>
    <source>
        <strain>HS</strain>
    </source>
</reference>
<evidence type="ECO:0000255" key="1">
    <source>
        <dbReference type="HAMAP-Rule" id="MF_00050"/>
    </source>
</evidence>
<dbReference type="EMBL" id="CP000802">
    <property type="protein sequence ID" value="ABV04570.1"/>
    <property type="molecule type" value="Genomic_DNA"/>
</dbReference>
<dbReference type="RefSeq" id="WP_000818114.1">
    <property type="nucleotide sequence ID" value="NC_009800.1"/>
</dbReference>
<dbReference type="SMR" id="A7ZWB6"/>
<dbReference type="GeneID" id="93777255"/>
<dbReference type="KEGG" id="ecx:EcHS_A0172"/>
<dbReference type="HOGENOM" id="CLU_047155_0_2_6"/>
<dbReference type="GO" id="GO:0005737">
    <property type="term" value="C:cytoplasm"/>
    <property type="evidence" value="ECO:0007669"/>
    <property type="project" value="UniProtKB-SubCell"/>
</dbReference>
<dbReference type="GO" id="GO:0003746">
    <property type="term" value="F:translation elongation factor activity"/>
    <property type="evidence" value="ECO:0007669"/>
    <property type="project" value="UniProtKB-UniRule"/>
</dbReference>
<dbReference type="CDD" id="cd14275">
    <property type="entry name" value="UBA_EF-Ts"/>
    <property type="match status" value="1"/>
</dbReference>
<dbReference type="FunFam" id="1.10.286.20:FF:000001">
    <property type="entry name" value="Elongation factor Ts"/>
    <property type="match status" value="1"/>
</dbReference>
<dbReference type="FunFam" id="1.10.8.10:FF:000001">
    <property type="entry name" value="Elongation factor Ts"/>
    <property type="match status" value="1"/>
</dbReference>
<dbReference type="FunFam" id="3.30.479.20:FF:000001">
    <property type="entry name" value="Elongation factor Ts"/>
    <property type="match status" value="1"/>
</dbReference>
<dbReference type="Gene3D" id="1.10.286.20">
    <property type="match status" value="1"/>
</dbReference>
<dbReference type="Gene3D" id="1.10.8.10">
    <property type="entry name" value="DNA helicase RuvA subunit, C-terminal domain"/>
    <property type="match status" value="1"/>
</dbReference>
<dbReference type="Gene3D" id="3.30.479.20">
    <property type="entry name" value="Elongation factor Ts, dimerisation domain"/>
    <property type="match status" value="2"/>
</dbReference>
<dbReference type="HAMAP" id="MF_00050">
    <property type="entry name" value="EF_Ts"/>
    <property type="match status" value="1"/>
</dbReference>
<dbReference type="InterPro" id="IPR036402">
    <property type="entry name" value="EF-Ts_dimer_sf"/>
</dbReference>
<dbReference type="InterPro" id="IPR001816">
    <property type="entry name" value="Transl_elong_EFTs/EF1B"/>
</dbReference>
<dbReference type="InterPro" id="IPR014039">
    <property type="entry name" value="Transl_elong_EFTs/EF1B_dimer"/>
</dbReference>
<dbReference type="InterPro" id="IPR018101">
    <property type="entry name" value="Transl_elong_Ts_CS"/>
</dbReference>
<dbReference type="InterPro" id="IPR009060">
    <property type="entry name" value="UBA-like_sf"/>
</dbReference>
<dbReference type="NCBIfam" id="TIGR00116">
    <property type="entry name" value="tsf"/>
    <property type="match status" value="1"/>
</dbReference>
<dbReference type="PANTHER" id="PTHR11741">
    <property type="entry name" value="ELONGATION FACTOR TS"/>
    <property type="match status" value="1"/>
</dbReference>
<dbReference type="PANTHER" id="PTHR11741:SF0">
    <property type="entry name" value="ELONGATION FACTOR TS, MITOCHONDRIAL"/>
    <property type="match status" value="1"/>
</dbReference>
<dbReference type="Pfam" id="PF00889">
    <property type="entry name" value="EF_TS"/>
    <property type="match status" value="1"/>
</dbReference>
<dbReference type="SUPFAM" id="SSF54713">
    <property type="entry name" value="Elongation factor Ts (EF-Ts), dimerisation domain"/>
    <property type="match status" value="2"/>
</dbReference>
<dbReference type="SUPFAM" id="SSF46934">
    <property type="entry name" value="UBA-like"/>
    <property type="match status" value="1"/>
</dbReference>
<dbReference type="PROSITE" id="PS01126">
    <property type="entry name" value="EF_TS_1"/>
    <property type="match status" value="1"/>
</dbReference>
<dbReference type="PROSITE" id="PS01127">
    <property type="entry name" value="EF_TS_2"/>
    <property type="match status" value="1"/>
</dbReference>
<keyword id="KW-0963">Cytoplasm</keyword>
<keyword id="KW-0251">Elongation factor</keyword>
<keyword id="KW-0648">Protein biosynthesis</keyword>
<gene>
    <name evidence="1" type="primary">tsf</name>
    <name type="ordered locus">EcHS_A0172</name>
</gene>
<accession>A7ZWB6</accession>